<keyword id="KW-0963">Cytoplasm</keyword>
<keyword id="KW-0378">Hydrolase</keyword>
<keyword id="KW-0645">Protease</keyword>
<keyword id="KW-0720">Serine protease</keyword>
<accession>Q5L6P3</accession>
<proteinExistence type="inferred from homology"/>
<dbReference type="EC" id="3.4.21.92" evidence="1"/>
<dbReference type="EMBL" id="CR848038">
    <property type="protein sequence ID" value="CAH63678.1"/>
    <property type="molecule type" value="Genomic_DNA"/>
</dbReference>
<dbReference type="RefSeq" id="WP_006343884.1">
    <property type="nucleotide sequence ID" value="NC_004552.2"/>
</dbReference>
<dbReference type="SMR" id="Q5L6P3"/>
<dbReference type="MEROPS" id="S14.005"/>
<dbReference type="KEGG" id="cab:CAB222"/>
<dbReference type="eggNOG" id="COG0740">
    <property type="taxonomic scope" value="Bacteria"/>
</dbReference>
<dbReference type="HOGENOM" id="CLU_058707_4_0_0"/>
<dbReference type="OrthoDB" id="20499at2"/>
<dbReference type="Proteomes" id="UP000001012">
    <property type="component" value="Chromosome"/>
</dbReference>
<dbReference type="GO" id="GO:0005737">
    <property type="term" value="C:cytoplasm"/>
    <property type="evidence" value="ECO:0007669"/>
    <property type="project" value="UniProtKB-SubCell"/>
</dbReference>
<dbReference type="GO" id="GO:0009368">
    <property type="term" value="C:endopeptidase Clp complex"/>
    <property type="evidence" value="ECO:0007669"/>
    <property type="project" value="TreeGrafter"/>
</dbReference>
<dbReference type="GO" id="GO:0004176">
    <property type="term" value="F:ATP-dependent peptidase activity"/>
    <property type="evidence" value="ECO:0007669"/>
    <property type="project" value="InterPro"/>
</dbReference>
<dbReference type="GO" id="GO:0051117">
    <property type="term" value="F:ATPase binding"/>
    <property type="evidence" value="ECO:0007669"/>
    <property type="project" value="TreeGrafter"/>
</dbReference>
<dbReference type="GO" id="GO:0004252">
    <property type="term" value="F:serine-type endopeptidase activity"/>
    <property type="evidence" value="ECO:0007669"/>
    <property type="project" value="UniProtKB-UniRule"/>
</dbReference>
<dbReference type="GO" id="GO:0006515">
    <property type="term" value="P:protein quality control for misfolded or incompletely synthesized proteins"/>
    <property type="evidence" value="ECO:0007669"/>
    <property type="project" value="TreeGrafter"/>
</dbReference>
<dbReference type="CDD" id="cd07017">
    <property type="entry name" value="S14_ClpP_2"/>
    <property type="match status" value="1"/>
</dbReference>
<dbReference type="FunFam" id="3.90.226.10:FF:000055">
    <property type="entry name" value="ATP-dependent Clp protease proteolytic subunit"/>
    <property type="match status" value="1"/>
</dbReference>
<dbReference type="Gene3D" id="3.90.226.10">
    <property type="entry name" value="2-enoyl-CoA Hydratase, Chain A, domain 1"/>
    <property type="match status" value="1"/>
</dbReference>
<dbReference type="HAMAP" id="MF_00444">
    <property type="entry name" value="ClpP"/>
    <property type="match status" value="1"/>
</dbReference>
<dbReference type="InterPro" id="IPR001907">
    <property type="entry name" value="ClpP"/>
</dbReference>
<dbReference type="InterPro" id="IPR029045">
    <property type="entry name" value="ClpP/crotonase-like_dom_sf"/>
</dbReference>
<dbReference type="InterPro" id="IPR023562">
    <property type="entry name" value="ClpP/TepA"/>
</dbReference>
<dbReference type="InterPro" id="IPR033135">
    <property type="entry name" value="ClpP_His_AS"/>
</dbReference>
<dbReference type="NCBIfam" id="NF009205">
    <property type="entry name" value="PRK12553.1"/>
    <property type="match status" value="1"/>
</dbReference>
<dbReference type="PANTHER" id="PTHR10381">
    <property type="entry name" value="ATP-DEPENDENT CLP PROTEASE PROTEOLYTIC SUBUNIT"/>
    <property type="match status" value="1"/>
</dbReference>
<dbReference type="PANTHER" id="PTHR10381:SF11">
    <property type="entry name" value="ATP-DEPENDENT CLP PROTEASE PROTEOLYTIC SUBUNIT, MITOCHONDRIAL"/>
    <property type="match status" value="1"/>
</dbReference>
<dbReference type="Pfam" id="PF00574">
    <property type="entry name" value="CLP_protease"/>
    <property type="match status" value="1"/>
</dbReference>
<dbReference type="PRINTS" id="PR00127">
    <property type="entry name" value="CLPPROTEASEP"/>
</dbReference>
<dbReference type="SUPFAM" id="SSF52096">
    <property type="entry name" value="ClpP/crotonase"/>
    <property type="match status" value="1"/>
</dbReference>
<dbReference type="PROSITE" id="PS00382">
    <property type="entry name" value="CLP_PROTEASE_HIS"/>
    <property type="match status" value="1"/>
</dbReference>
<gene>
    <name evidence="1" type="primary">clpP1</name>
    <name type="ordered locus">CAB222</name>
</gene>
<comment type="function">
    <text evidence="1">Cleaves peptides in various proteins in a process that requires ATP hydrolysis. Has a chymotrypsin-like activity. Plays a major role in the degradation of misfolded proteins.</text>
</comment>
<comment type="catalytic activity">
    <reaction evidence="1">
        <text>Hydrolysis of proteins to small peptides in the presence of ATP and magnesium. alpha-casein is the usual test substrate. In the absence of ATP, only oligopeptides shorter than five residues are hydrolyzed (such as succinyl-Leu-Tyr-|-NHMec, and Leu-Tyr-Leu-|-Tyr-Trp, in which cleavage of the -Tyr-|-Leu- and -Tyr-|-Trp bonds also occurs).</text>
        <dbReference type="EC" id="3.4.21.92"/>
    </reaction>
</comment>
<comment type="subunit">
    <text evidence="1">Fourteen ClpP subunits assemble into 2 heptameric rings which stack back to back to give a disk-like structure with a central cavity, resembling the structure of eukaryotic proteasomes.</text>
</comment>
<comment type="subcellular location">
    <subcellularLocation>
        <location evidence="1">Cytoplasm</location>
    </subcellularLocation>
</comment>
<comment type="similarity">
    <text evidence="1">Belongs to the peptidase S14 family.</text>
</comment>
<evidence type="ECO:0000255" key="1">
    <source>
        <dbReference type="HAMAP-Rule" id="MF_00444"/>
    </source>
</evidence>
<organism>
    <name type="scientific">Chlamydia abortus (strain DSM 27085 / S26/3)</name>
    <name type="common">Chlamydophila abortus</name>
    <dbReference type="NCBI Taxonomy" id="218497"/>
    <lineage>
        <taxon>Bacteria</taxon>
        <taxon>Pseudomonadati</taxon>
        <taxon>Chlamydiota</taxon>
        <taxon>Chlamydiia</taxon>
        <taxon>Chlamydiales</taxon>
        <taxon>Chlamydiaceae</taxon>
        <taxon>Chlamydia/Chlamydophila group</taxon>
        <taxon>Chlamydia</taxon>
    </lineage>
</organism>
<feature type="chain" id="PRO_0000226437" description="ATP-dependent Clp protease proteolytic subunit 1">
    <location>
        <begin position="1"/>
        <end position="192"/>
    </location>
</feature>
<feature type="active site" description="Nucleophile" evidence="1">
    <location>
        <position position="92"/>
    </location>
</feature>
<feature type="active site" evidence="1">
    <location>
        <position position="117"/>
    </location>
</feature>
<protein>
    <recommendedName>
        <fullName evidence="1">ATP-dependent Clp protease proteolytic subunit 1</fullName>
        <ecNumber evidence="1">3.4.21.92</ecNumber>
    </recommendedName>
    <alternativeName>
        <fullName evidence="1">Endopeptidase Clp 1</fullName>
    </alternativeName>
</protein>
<name>CLPP1_CHLAB</name>
<reference key="1">
    <citation type="journal article" date="2005" name="Genome Res.">
        <title>The Chlamydophila abortus genome sequence reveals an array of variable proteins that contribute to interspecies variation.</title>
        <authorList>
            <person name="Thomson N.R."/>
            <person name="Yeats C."/>
            <person name="Bell K."/>
            <person name="Holden M.T.G."/>
            <person name="Bentley S.D."/>
            <person name="Livingstone M."/>
            <person name="Cerdeno-Tarraga A.-M."/>
            <person name="Harris B."/>
            <person name="Doggett J."/>
            <person name="Ormond D."/>
            <person name="Mungall K."/>
            <person name="Clarke K."/>
            <person name="Feltwell T."/>
            <person name="Hance Z."/>
            <person name="Sanders M."/>
            <person name="Quail M.A."/>
            <person name="Price C."/>
            <person name="Barrell B.G."/>
            <person name="Parkhill J."/>
            <person name="Longbottom D."/>
        </authorList>
    </citation>
    <scope>NUCLEOTIDE SEQUENCE [LARGE SCALE GENOMIC DNA]</scope>
    <source>
        <strain>DSM 27085 / S26/3</strain>
    </source>
</reference>
<sequence>MADGEVENKLRDVIERKILDARRVFFSEPVTDKSAADAIKKLWYLELTNPGQPIVFVINSPGGSVDAGFAVWDQIKMMTSPVTTVVTGLAASMGSVLSLCAAPGRRFATPHSRIMIHQPSIGGPITGQATDLDIHAREILKTKKRIVDVYLEATGQSREVIEKAIDRDTWMTADEAKDFGLLDGILFSFNDL</sequence>